<reference key="1">
    <citation type="journal article" date="2003" name="Genome Res.">
        <title>Comparative genome analysis of Vibrio vulnificus, a marine pathogen.</title>
        <authorList>
            <person name="Chen C.-Y."/>
            <person name="Wu K.-M."/>
            <person name="Chang Y.-C."/>
            <person name="Chang C.-H."/>
            <person name="Tsai H.-C."/>
            <person name="Liao T.-L."/>
            <person name="Liu Y.-M."/>
            <person name="Chen H.-J."/>
            <person name="Shen A.B.-T."/>
            <person name="Li J.-C."/>
            <person name="Su T.-L."/>
            <person name="Shao C.-P."/>
            <person name="Lee C.-T."/>
            <person name="Hor L.-I."/>
            <person name="Tsai S.-F."/>
        </authorList>
    </citation>
    <scope>NUCLEOTIDE SEQUENCE [LARGE SCALE GENOMIC DNA]</scope>
    <source>
        <strain>YJ016</strain>
    </source>
</reference>
<proteinExistence type="inferred from homology"/>
<evidence type="ECO:0000255" key="1">
    <source>
        <dbReference type="HAMAP-Rule" id="MF_01726"/>
    </source>
</evidence>
<evidence type="ECO:0000305" key="2"/>
<name>POTA_VIBVY</name>
<keyword id="KW-0067">ATP-binding</keyword>
<keyword id="KW-0997">Cell inner membrane</keyword>
<keyword id="KW-1003">Cell membrane</keyword>
<keyword id="KW-0472">Membrane</keyword>
<keyword id="KW-0547">Nucleotide-binding</keyword>
<keyword id="KW-1278">Translocase</keyword>
<keyword id="KW-0813">Transport</keyword>
<protein>
    <recommendedName>
        <fullName evidence="1">Spermidine/putrescine import ATP-binding protein PotA</fullName>
        <ecNumber evidence="1">7.6.2.11</ecNumber>
    </recommendedName>
</protein>
<accession>Q7MKU3</accession>
<gene>
    <name evidence="1" type="primary">potA</name>
    <name type="ordered locus">VV1685</name>
</gene>
<comment type="function">
    <text evidence="1">Part of the ABC transporter complex PotABCD involved in spermidine/putrescine import. Responsible for energy coupling to the transport system.</text>
</comment>
<comment type="catalytic activity">
    <reaction evidence="1">
        <text>ATP + H2O + polyamine-[polyamine-binding protein]Side 1 = ADP + phosphate + polyamineSide 2 + [polyamine-binding protein]Side 1.</text>
        <dbReference type="EC" id="7.6.2.11"/>
    </reaction>
</comment>
<comment type="subunit">
    <text evidence="1">The complex is composed of two ATP-binding proteins (PotA), two transmembrane proteins (PotB and PotC) and a solute-binding protein (PotD).</text>
</comment>
<comment type="subcellular location">
    <subcellularLocation>
        <location evidence="1">Cell inner membrane</location>
        <topology evidence="1">Peripheral membrane protein</topology>
    </subcellularLocation>
</comment>
<comment type="similarity">
    <text evidence="1">Belongs to the ABC transporter superfamily. Spermidine/putrescine importer (TC 3.A.1.11.1) family.</text>
</comment>
<comment type="sequence caution" evidence="2">
    <conflict type="erroneous initiation">
        <sequence resource="EMBL-CDS" id="BAC94449"/>
    </conflict>
</comment>
<dbReference type="EC" id="7.6.2.11" evidence="1"/>
<dbReference type="EMBL" id="BA000037">
    <property type="protein sequence ID" value="BAC94449.1"/>
    <property type="status" value="ALT_INIT"/>
    <property type="molecule type" value="Genomic_DNA"/>
</dbReference>
<dbReference type="SMR" id="Q7MKU3"/>
<dbReference type="STRING" id="672.VV93_v1c15750"/>
<dbReference type="KEGG" id="vvy:VV1685"/>
<dbReference type="eggNOG" id="COG3842">
    <property type="taxonomic scope" value="Bacteria"/>
</dbReference>
<dbReference type="HOGENOM" id="CLU_000604_1_1_6"/>
<dbReference type="Proteomes" id="UP000002675">
    <property type="component" value="Chromosome I"/>
</dbReference>
<dbReference type="GO" id="GO:0043190">
    <property type="term" value="C:ATP-binding cassette (ABC) transporter complex"/>
    <property type="evidence" value="ECO:0007669"/>
    <property type="project" value="InterPro"/>
</dbReference>
<dbReference type="GO" id="GO:0015594">
    <property type="term" value="F:ABC-type putrescine transporter activity"/>
    <property type="evidence" value="ECO:0007669"/>
    <property type="project" value="InterPro"/>
</dbReference>
<dbReference type="GO" id="GO:0005524">
    <property type="term" value="F:ATP binding"/>
    <property type="evidence" value="ECO:0007669"/>
    <property type="project" value="UniProtKB-KW"/>
</dbReference>
<dbReference type="GO" id="GO:0016887">
    <property type="term" value="F:ATP hydrolysis activity"/>
    <property type="evidence" value="ECO:0007669"/>
    <property type="project" value="InterPro"/>
</dbReference>
<dbReference type="CDD" id="cd03300">
    <property type="entry name" value="ABC_PotA_N"/>
    <property type="match status" value="1"/>
</dbReference>
<dbReference type="FunFam" id="3.40.50.300:FF:000133">
    <property type="entry name" value="Spermidine/putrescine import ATP-binding protein PotA"/>
    <property type="match status" value="1"/>
</dbReference>
<dbReference type="Gene3D" id="2.40.50.100">
    <property type="match status" value="1"/>
</dbReference>
<dbReference type="Gene3D" id="3.40.50.300">
    <property type="entry name" value="P-loop containing nucleotide triphosphate hydrolases"/>
    <property type="match status" value="1"/>
</dbReference>
<dbReference type="InterPro" id="IPR003593">
    <property type="entry name" value="AAA+_ATPase"/>
</dbReference>
<dbReference type="InterPro" id="IPR050093">
    <property type="entry name" value="ABC_SmlMolc_Importer"/>
</dbReference>
<dbReference type="InterPro" id="IPR003439">
    <property type="entry name" value="ABC_transporter-like_ATP-bd"/>
</dbReference>
<dbReference type="InterPro" id="IPR017871">
    <property type="entry name" value="ABC_transporter-like_CS"/>
</dbReference>
<dbReference type="InterPro" id="IPR008995">
    <property type="entry name" value="Mo/tungstate-bd_C_term_dom"/>
</dbReference>
<dbReference type="InterPro" id="IPR027417">
    <property type="entry name" value="P-loop_NTPase"/>
</dbReference>
<dbReference type="InterPro" id="IPR005893">
    <property type="entry name" value="PotA-like"/>
</dbReference>
<dbReference type="InterPro" id="IPR017879">
    <property type="entry name" value="PotA_ATP-bd"/>
</dbReference>
<dbReference type="InterPro" id="IPR013611">
    <property type="entry name" value="Transp-assoc_OB_typ2"/>
</dbReference>
<dbReference type="NCBIfam" id="TIGR01187">
    <property type="entry name" value="potA"/>
    <property type="match status" value="1"/>
</dbReference>
<dbReference type="NCBIfam" id="NF006987">
    <property type="entry name" value="PRK09452.1"/>
    <property type="match status" value="1"/>
</dbReference>
<dbReference type="PANTHER" id="PTHR42781">
    <property type="entry name" value="SPERMIDINE/PUTRESCINE IMPORT ATP-BINDING PROTEIN POTA"/>
    <property type="match status" value="1"/>
</dbReference>
<dbReference type="PANTHER" id="PTHR42781:SF4">
    <property type="entry name" value="SPERMIDINE_PUTRESCINE IMPORT ATP-BINDING PROTEIN POTA"/>
    <property type="match status" value="1"/>
</dbReference>
<dbReference type="Pfam" id="PF00005">
    <property type="entry name" value="ABC_tran"/>
    <property type="match status" value="1"/>
</dbReference>
<dbReference type="Pfam" id="PF08402">
    <property type="entry name" value="TOBE_2"/>
    <property type="match status" value="1"/>
</dbReference>
<dbReference type="SMART" id="SM00382">
    <property type="entry name" value="AAA"/>
    <property type="match status" value="1"/>
</dbReference>
<dbReference type="SUPFAM" id="SSF50331">
    <property type="entry name" value="MOP-like"/>
    <property type="match status" value="1"/>
</dbReference>
<dbReference type="SUPFAM" id="SSF52540">
    <property type="entry name" value="P-loop containing nucleoside triphosphate hydrolases"/>
    <property type="match status" value="1"/>
</dbReference>
<dbReference type="PROSITE" id="PS00211">
    <property type="entry name" value="ABC_TRANSPORTER_1"/>
    <property type="match status" value="1"/>
</dbReference>
<dbReference type="PROSITE" id="PS50893">
    <property type="entry name" value="ABC_TRANSPORTER_2"/>
    <property type="match status" value="1"/>
</dbReference>
<dbReference type="PROSITE" id="PS51305">
    <property type="entry name" value="POTA"/>
    <property type="match status" value="1"/>
</dbReference>
<organism>
    <name type="scientific">Vibrio vulnificus (strain YJ016)</name>
    <dbReference type="NCBI Taxonomy" id="196600"/>
    <lineage>
        <taxon>Bacteria</taxon>
        <taxon>Pseudomonadati</taxon>
        <taxon>Pseudomonadota</taxon>
        <taxon>Gammaproteobacteria</taxon>
        <taxon>Vibrionales</taxon>
        <taxon>Vibrionaceae</taxon>
        <taxon>Vibrio</taxon>
    </lineage>
</organism>
<sequence length="377" mass="42482">MGEIQTLNAKQNAGQPVIRLSGISKSFDGKEIIGNLNLDVNHGEFLTILGPSGCGKTTVLRMIAGFETADNGQITIDNQDVTNVPAEQRHVNTVFQSYALFPHMTVFDNVAFGLRMQKVPAAEIEPRVMDALKMVRLESMAQRKPHQLSGGQQQRIAIARAVVNKPKVLLLDESLSALDYKLRKQMQIELKQLQRQLGITFIFVTHDQEEALSMSDRIIVMRSGVIEQDGSPREIYEDPKNLFVARFIGEINVFEATAKERLDENRIRAEIEGVDSVVYFDQPVTEGQKLQVLLRPEDLRIEEIKESEEKGIVGHVTERTYKGMTLDSVIETESGMRVMVSEFFNEDDPDVDHSLGQKVAITWVESWEVVLSDEQEI</sequence>
<feature type="chain" id="PRO_0000286327" description="Spermidine/putrescine import ATP-binding protein PotA">
    <location>
        <begin position="1"/>
        <end position="377"/>
    </location>
</feature>
<feature type="domain" description="ABC transporter" evidence="1">
    <location>
        <begin position="18"/>
        <end position="248"/>
    </location>
</feature>
<feature type="binding site" evidence="1">
    <location>
        <begin position="50"/>
        <end position="57"/>
    </location>
    <ligand>
        <name>ATP</name>
        <dbReference type="ChEBI" id="CHEBI:30616"/>
    </ligand>
</feature>